<evidence type="ECO:0000255" key="1">
    <source>
        <dbReference type="HAMAP-Rule" id="MF_00023"/>
    </source>
</evidence>
<protein>
    <recommendedName>
        <fullName evidence="1">SsrA-binding protein</fullName>
    </recommendedName>
    <alternativeName>
        <fullName evidence="1">Small protein B</fullName>
    </alternativeName>
</protein>
<accession>Q9AKE3</accession>
<proteinExistence type="inferred from homology"/>
<gene>
    <name evidence="1" type="primary">smpB</name>
    <name type="ordered locus">RT0416</name>
</gene>
<sequence length="152" mass="17808">MTEYKKVIAQNKKAIFNYFIEEILEAGIVLKGSEVQSLRQGKASIDESYASDNGHEVFLYNCHITEYEKANRFNHSTRRPRKLLLHTKEIKKIIGKIRIKGYTLVALSMYFNKNNKVKVELGIAKGKKLYDKRATIKEKDWKKDQSRLIRQK</sequence>
<keyword id="KW-0963">Cytoplasm</keyword>
<keyword id="KW-0694">RNA-binding</keyword>
<name>SSRP_RICTY</name>
<dbReference type="EMBL" id="AJ293310">
    <property type="protein sequence ID" value="CAC33723.1"/>
    <property type="molecule type" value="Genomic_DNA"/>
</dbReference>
<dbReference type="EMBL" id="AE017197">
    <property type="protein sequence ID" value="AAU03893.1"/>
    <property type="molecule type" value="Genomic_DNA"/>
</dbReference>
<dbReference type="RefSeq" id="WP_011190877.1">
    <property type="nucleotide sequence ID" value="NC_006142.1"/>
</dbReference>
<dbReference type="SMR" id="Q9AKE3"/>
<dbReference type="KEGG" id="rty:RT0416"/>
<dbReference type="eggNOG" id="COG0691">
    <property type="taxonomic scope" value="Bacteria"/>
</dbReference>
<dbReference type="HOGENOM" id="CLU_108953_0_0_5"/>
<dbReference type="OrthoDB" id="9805462at2"/>
<dbReference type="Proteomes" id="UP000000604">
    <property type="component" value="Chromosome"/>
</dbReference>
<dbReference type="GO" id="GO:0005829">
    <property type="term" value="C:cytosol"/>
    <property type="evidence" value="ECO:0007669"/>
    <property type="project" value="TreeGrafter"/>
</dbReference>
<dbReference type="GO" id="GO:0003723">
    <property type="term" value="F:RNA binding"/>
    <property type="evidence" value="ECO:0007669"/>
    <property type="project" value="UniProtKB-UniRule"/>
</dbReference>
<dbReference type="GO" id="GO:0070929">
    <property type="term" value="P:trans-translation"/>
    <property type="evidence" value="ECO:0007669"/>
    <property type="project" value="UniProtKB-UniRule"/>
</dbReference>
<dbReference type="CDD" id="cd09294">
    <property type="entry name" value="SmpB"/>
    <property type="match status" value="1"/>
</dbReference>
<dbReference type="Gene3D" id="2.40.280.10">
    <property type="match status" value="1"/>
</dbReference>
<dbReference type="HAMAP" id="MF_00023">
    <property type="entry name" value="SmpB"/>
    <property type="match status" value="1"/>
</dbReference>
<dbReference type="InterPro" id="IPR023620">
    <property type="entry name" value="SmpB"/>
</dbReference>
<dbReference type="InterPro" id="IPR000037">
    <property type="entry name" value="SsrA-bd_prot"/>
</dbReference>
<dbReference type="InterPro" id="IPR020081">
    <property type="entry name" value="SsrA-bd_prot_CS"/>
</dbReference>
<dbReference type="NCBIfam" id="NF003843">
    <property type="entry name" value="PRK05422.1"/>
    <property type="match status" value="1"/>
</dbReference>
<dbReference type="NCBIfam" id="TIGR00086">
    <property type="entry name" value="smpB"/>
    <property type="match status" value="1"/>
</dbReference>
<dbReference type="PANTHER" id="PTHR30308:SF2">
    <property type="entry name" value="SSRA-BINDING PROTEIN"/>
    <property type="match status" value="1"/>
</dbReference>
<dbReference type="PANTHER" id="PTHR30308">
    <property type="entry name" value="TMRNA-BINDING COMPONENT OF TRANS-TRANSLATION TAGGING COMPLEX"/>
    <property type="match status" value="1"/>
</dbReference>
<dbReference type="Pfam" id="PF01668">
    <property type="entry name" value="SmpB"/>
    <property type="match status" value="1"/>
</dbReference>
<dbReference type="SUPFAM" id="SSF74982">
    <property type="entry name" value="Small protein B (SmpB)"/>
    <property type="match status" value="1"/>
</dbReference>
<dbReference type="PROSITE" id="PS01317">
    <property type="entry name" value="SSRP"/>
    <property type="match status" value="1"/>
</dbReference>
<feature type="chain" id="PRO_0000103020" description="SsrA-binding protein">
    <location>
        <begin position="1"/>
        <end position="152"/>
    </location>
</feature>
<organism>
    <name type="scientific">Rickettsia typhi (strain ATCC VR-144 / Wilmington)</name>
    <dbReference type="NCBI Taxonomy" id="257363"/>
    <lineage>
        <taxon>Bacteria</taxon>
        <taxon>Pseudomonadati</taxon>
        <taxon>Pseudomonadota</taxon>
        <taxon>Alphaproteobacteria</taxon>
        <taxon>Rickettsiales</taxon>
        <taxon>Rickettsiaceae</taxon>
        <taxon>Rickettsieae</taxon>
        <taxon>Rickettsia</taxon>
        <taxon>typhus group</taxon>
    </lineage>
</organism>
<reference key="1">
    <citation type="journal article" date="2001" name="Mol. Biol. Evol.">
        <title>Pseudogenes, junk DNA, and the dynamics of Rickettsia genomes.</title>
        <authorList>
            <person name="Andersson J.O."/>
            <person name="Andersson S.G.E."/>
        </authorList>
    </citation>
    <scope>NUCLEOTIDE SEQUENCE [GENOMIC DNA]</scope>
    <source>
        <strain>ATCC VR-144 / Wilmington</strain>
    </source>
</reference>
<reference key="2">
    <citation type="journal article" date="2004" name="J. Bacteriol.">
        <title>Complete genome sequence of Rickettsia typhi and comparison with sequences of other Rickettsiae.</title>
        <authorList>
            <person name="McLeod M.P."/>
            <person name="Qin X."/>
            <person name="Karpathy S.E."/>
            <person name="Gioia J."/>
            <person name="Highlander S.K."/>
            <person name="Fox G.E."/>
            <person name="McNeill T.Z."/>
            <person name="Jiang H."/>
            <person name="Muzny D."/>
            <person name="Jacob L.S."/>
            <person name="Hawes A.C."/>
            <person name="Sodergren E."/>
            <person name="Gill R."/>
            <person name="Hume J."/>
            <person name="Morgan M."/>
            <person name="Fan G."/>
            <person name="Amin A.G."/>
            <person name="Gibbs R.A."/>
            <person name="Hong C."/>
            <person name="Yu X.-J."/>
            <person name="Walker D.H."/>
            <person name="Weinstock G.M."/>
        </authorList>
    </citation>
    <scope>NUCLEOTIDE SEQUENCE [LARGE SCALE GENOMIC DNA]</scope>
    <source>
        <strain>ATCC VR-144 / Wilmington</strain>
    </source>
</reference>
<comment type="function">
    <text evidence="1">Required for rescue of stalled ribosomes mediated by trans-translation. Binds to transfer-messenger RNA (tmRNA), required for stable association of tmRNA with ribosomes. tmRNA and SmpB together mimic tRNA shape, replacing the anticodon stem-loop with SmpB. tmRNA is encoded by the ssrA gene; the 2 termini fold to resemble tRNA(Ala) and it encodes a 'tag peptide', a short internal open reading frame. During trans-translation Ala-aminoacylated tmRNA acts like a tRNA, entering the A-site of stalled ribosomes, displacing the stalled mRNA. The ribosome then switches to translate the ORF on the tmRNA; the nascent peptide is terminated with the 'tag peptide' encoded by the tmRNA and targeted for degradation. The ribosome is freed to recommence translation, which seems to be the essential function of trans-translation.</text>
</comment>
<comment type="subcellular location">
    <subcellularLocation>
        <location evidence="1">Cytoplasm</location>
    </subcellularLocation>
    <text evidence="1">The tmRNA-SmpB complex associates with stalled 70S ribosomes.</text>
</comment>
<comment type="similarity">
    <text evidence="1">Belongs to the SmpB family.</text>
</comment>